<comment type="function">
    <text evidence="1">Synthesizes alpha-1,4-glucan chains using ADP-glucose.</text>
</comment>
<comment type="catalytic activity">
    <reaction evidence="1">
        <text>[(1-&gt;4)-alpha-D-glucosyl](n) + ADP-alpha-D-glucose = [(1-&gt;4)-alpha-D-glucosyl](n+1) + ADP + H(+)</text>
        <dbReference type="Rhea" id="RHEA:18189"/>
        <dbReference type="Rhea" id="RHEA-COMP:9584"/>
        <dbReference type="Rhea" id="RHEA-COMP:9587"/>
        <dbReference type="ChEBI" id="CHEBI:15378"/>
        <dbReference type="ChEBI" id="CHEBI:15444"/>
        <dbReference type="ChEBI" id="CHEBI:57498"/>
        <dbReference type="ChEBI" id="CHEBI:456216"/>
        <dbReference type="EC" id="2.4.1.21"/>
    </reaction>
</comment>
<comment type="pathway">
    <text evidence="1">Glycan biosynthesis; glycogen biosynthesis.</text>
</comment>
<comment type="similarity">
    <text evidence="1">Belongs to the glycosyltransferase 1 family. Bacterial/plant glycogen synthase subfamily.</text>
</comment>
<reference key="1">
    <citation type="journal article" date="2002" name="Nature">
        <title>Comparison of the genomes of two Xanthomonas pathogens with differing host specificities.</title>
        <authorList>
            <person name="da Silva A.C.R."/>
            <person name="Ferro J.A."/>
            <person name="Reinach F.C."/>
            <person name="Farah C.S."/>
            <person name="Furlan L.R."/>
            <person name="Quaggio R.B."/>
            <person name="Monteiro-Vitorello C.B."/>
            <person name="Van Sluys M.A."/>
            <person name="Almeida N.F. Jr."/>
            <person name="Alves L.M.C."/>
            <person name="do Amaral A.M."/>
            <person name="Bertolini M.C."/>
            <person name="Camargo L.E.A."/>
            <person name="Camarotte G."/>
            <person name="Cannavan F."/>
            <person name="Cardozo J."/>
            <person name="Chambergo F."/>
            <person name="Ciapina L.P."/>
            <person name="Cicarelli R.M.B."/>
            <person name="Coutinho L.L."/>
            <person name="Cursino-Santos J.R."/>
            <person name="El-Dorry H."/>
            <person name="Faria J.B."/>
            <person name="Ferreira A.J.S."/>
            <person name="Ferreira R.C.C."/>
            <person name="Ferro M.I.T."/>
            <person name="Formighieri E.F."/>
            <person name="Franco M.C."/>
            <person name="Greggio C.C."/>
            <person name="Gruber A."/>
            <person name="Katsuyama A.M."/>
            <person name="Kishi L.T."/>
            <person name="Leite R.P."/>
            <person name="Lemos E.G.M."/>
            <person name="Lemos M.V.F."/>
            <person name="Locali E.C."/>
            <person name="Machado M.A."/>
            <person name="Madeira A.M.B.N."/>
            <person name="Martinez-Rossi N.M."/>
            <person name="Martins E.C."/>
            <person name="Meidanis J."/>
            <person name="Menck C.F.M."/>
            <person name="Miyaki C.Y."/>
            <person name="Moon D.H."/>
            <person name="Moreira L.M."/>
            <person name="Novo M.T.M."/>
            <person name="Okura V.K."/>
            <person name="Oliveira M.C."/>
            <person name="Oliveira V.R."/>
            <person name="Pereira H.A."/>
            <person name="Rossi A."/>
            <person name="Sena J.A.D."/>
            <person name="Silva C."/>
            <person name="de Souza R.F."/>
            <person name="Spinola L.A.F."/>
            <person name="Takita M.A."/>
            <person name="Tamura R.E."/>
            <person name="Teixeira E.C."/>
            <person name="Tezza R.I.D."/>
            <person name="Trindade dos Santos M."/>
            <person name="Truffi D."/>
            <person name="Tsai S.M."/>
            <person name="White F.F."/>
            <person name="Setubal J.C."/>
            <person name="Kitajima J.P."/>
        </authorList>
    </citation>
    <scope>NUCLEOTIDE SEQUENCE [LARGE SCALE GENOMIC DNA]</scope>
    <source>
        <strain>306</strain>
    </source>
</reference>
<dbReference type="EC" id="2.4.1.21" evidence="1"/>
<dbReference type="EMBL" id="AE008923">
    <property type="protein sequence ID" value="AAM35316.1"/>
    <property type="molecule type" value="Genomic_DNA"/>
</dbReference>
<dbReference type="SMR" id="Q8PQA3"/>
<dbReference type="CAZy" id="GT5">
    <property type="family name" value="Glycosyltransferase Family 5"/>
</dbReference>
<dbReference type="KEGG" id="xac:XAC0425"/>
<dbReference type="eggNOG" id="COG0297">
    <property type="taxonomic scope" value="Bacteria"/>
</dbReference>
<dbReference type="HOGENOM" id="CLU_009583_18_2_6"/>
<dbReference type="UniPathway" id="UPA00164"/>
<dbReference type="Proteomes" id="UP000000576">
    <property type="component" value="Chromosome"/>
</dbReference>
<dbReference type="GO" id="GO:0009011">
    <property type="term" value="F:alpha-1,4-glucan glucosyltransferase (ADP-glucose donor) activity"/>
    <property type="evidence" value="ECO:0007669"/>
    <property type="project" value="UniProtKB-UniRule"/>
</dbReference>
<dbReference type="GO" id="GO:0004373">
    <property type="term" value="F:alpha-1,4-glucan glucosyltransferase (UDP-glucose donor) activity"/>
    <property type="evidence" value="ECO:0007669"/>
    <property type="project" value="InterPro"/>
</dbReference>
<dbReference type="GO" id="GO:0005978">
    <property type="term" value="P:glycogen biosynthetic process"/>
    <property type="evidence" value="ECO:0007669"/>
    <property type="project" value="UniProtKB-UniRule"/>
</dbReference>
<dbReference type="CDD" id="cd03791">
    <property type="entry name" value="GT5_Glycogen_synthase_DULL1-like"/>
    <property type="match status" value="1"/>
</dbReference>
<dbReference type="Gene3D" id="3.40.50.2000">
    <property type="entry name" value="Glycogen Phosphorylase B"/>
    <property type="match status" value="2"/>
</dbReference>
<dbReference type="HAMAP" id="MF_00484">
    <property type="entry name" value="Glycogen_synth"/>
    <property type="match status" value="1"/>
</dbReference>
<dbReference type="InterPro" id="IPR001296">
    <property type="entry name" value="Glyco_trans_1"/>
</dbReference>
<dbReference type="InterPro" id="IPR011835">
    <property type="entry name" value="GS/SS"/>
</dbReference>
<dbReference type="InterPro" id="IPR013534">
    <property type="entry name" value="Starch_synth_cat_dom"/>
</dbReference>
<dbReference type="NCBIfam" id="TIGR02095">
    <property type="entry name" value="glgA"/>
    <property type="match status" value="1"/>
</dbReference>
<dbReference type="NCBIfam" id="NF001899">
    <property type="entry name" value="PRK00654.1-2"/>
    <property type="match status" value="1"/>
</dbReference>
<dbReference type="NCBIfam" id="NF001901">
    <property type="entry name" value="PRK00654.1-5"/>
    <property type="match status" value="1"/>
</dbReference>
<dbReference type="PANTHER" id="PTHR45825:SF8">
    <property type="entry name" value="GLYCOGEN SYNTHASE"/>
    <property type="match status" value="1"/>
</dbReference>
<dbReference type="PANTHER" id="PTHR45825">
    <property type="entry name" value="GRANULE-BOUND STARCH SYNTHASE 1, CHLOROPLASTIC/AMYLOPLASTIC"/>
    <property type="match status" value="1"/>
</dbReference>
<dbReference type="Pfam" id="PF08323">
    <property type="entry name" value="Glyco_transf_5"/>
    <property type="match status" value="1"/>
</dbReference>
<dbReference type="Pfam" id="PF00534">
    <property type="entry name" value="Glycos_transf_1"/>
    <property type="match status" value="1"/>
</dbReference>
<dbReference type="SUPFAM" id="SSF53756">
    <property type="entry name" value="UDP-Glycosyltransferase/glycogen phosphorylase"/>
    <property type="match status" value="1"/>
</dbReference>
<evidence type="ECO:0000255" key="1">
    <source>
        <dbReference type="HAMAP-Rule" id="MF_00484"/>
    </source>
</evidence>
<accession>Q8PQA3</accession>
<gene>
    <name evidence="1" type="primary">glgA</name>
    <name type="ordered locus">XAC0425</name>
</gene>
<proteinExistence type="inferred from homology"/>
<feature type="chain" id="PRO_0000188664" description="Glycogen synthase">
    <location>
        <begin position="1"/>
        <end position="474"/>
    </location>
</feature>
<feature type="binding site" evidence="1">
    <location>
        <position position="12"/>
    </location>
    <ligand>
        <name>ADP-alpha-D-glucose</name>
        <dbReference type="ChEBI" id="CHEBI:57498"/>
    </ligand>
</feature>
<sequence length="474" mass="50869">MFVVSEMADFIKAGGLGDVAAALPRALRHRYDVRVLIPGYRAVLERAGKVEIVGRVLAHAALPACDIGRIVQSDGLPIYILLSKELFERDGSPYVSTSGSEFEDNAIRFATLSHAAAQIAAGHAGLGWKPRLLHLNDWPCALAAGYVRWSGGTTPCLLTIHNLAYQGLVPYSMAAALGIPAERVAELEFYGQMSFLRGGIVNADHVNTVSVSYAKQITGPAQGCGLDRLLAGRAAKGALTGIVNGIDASWDPRTDQYLDSHFSVNQWQGRQANAAQVRKAFGLRESAGPLFAVVSRLVHQKGLDLICEVAPQIVAAGGQIAVIGGGEPEIEQQVAELTRRYPGQVGAFIGFEEGLARRMFAGADFLLMPSRFEPCGLSQMYAQRFGCLPIAHATGGLIDTVDDGVTGFLFQHASVEALRRCLERAFRTFRLPSLLSAMRRAAMLRPSGWDVAGKKYLSLYEHTAATAPALATVP</sequence>
<organism>
    <name type="scientific">Xanthomonas axonopodis pv. citri (strain 306)</name>
    <dbReference type="NCBI Taxonomy" id="190486"/>
    <lineage>
        <taxon>Bacteria</taxon>
        <taxon>Pseudomonadati</taxon>
        <taxon>Pseudomonadota</taxon>
        <taxon>Gammaproteobacteria</taxon>
        <taxon>Lysobacterales</taxon>
        <taxon>Lysobacteraceae</taxon>
        <taxon>Xanthomonas</taxon>
    </lineage>
</organism>
<protein>
    <recommendedName>
        <fullName evidence="1">Glycogen synthase</fullName>
        <ecNumber evidence="1">2.4.1.21</ecNumber>
    </recommendedName>
    <alternativeName>
        <fullName evidence="1">Starch [bacterial glycogen] synthase</fullName>
    </alternativeName>
</protein>
<name>GLGA_XANAC</name>
<keyword id="KW-0320">Glycogen biosynthesis</keyword>
<keyword id="KW-0328">Glycosyltransferase</keyword>
<keyword id="KW-0808">Transferase</keyword>